<reference key="1">
    <citation type="journal article" date="2009" name="PLoS Pathog.">
        <title>Genomic evidence for the evolution of Streptococcus equi: host restriction, increased virulence, and genetic exchange with human pathogens.</title>
        <authorList>
            <person name="Holden M.T.G."/>
            <person name="Heather Z."/>
            <person name="Paillot R."/>
            <person name="Steward K.F."/>
            <person name="Webb K."/>
            <person name="Ainslie F."/>
            <person name="Jourdan T."/>
            <person name="Bason N.C."/>
            <person name="Holroyd N.E."/>
            <person name="Mungall K."/>
            <person name="Quail M.A."/>
            <person name="Sanders M."/>
            <person name="Simmonds M."/>
            <person name="Willey D."/>
            <person name="Brooks K."/>
            <person name="Aanensen D.M."/>
            <person name="Spratt B.G."/>
            <person name="Jolley K.A."/>
            <person name="Maiden M.C.J."/>
            <person name="Kehoe M."/>
            <person name="Chanter N."/>
            <person name="Bentley S.D."/>
            <person name="Robinson C."/>
            <person name="Maskell D.J."/>
            <person name="Parkhill J."/>
            <person name="Waller A.S."/>
        </authorList>
    </citation>
    <scope>NUCLEOTIDE SEQUENCE [LARGE SCALE GENOMIC DNA]</scope>
    <source>
        <strain>4047</strain>
    </source>
</reference>
<protein>
    <recommendedName>
        <fullName evidence="2">Small ribosomal subunit protein uS12</fullName>
    </recommendedName>
    <alternativeName>
        <fullName evidence="4">30S ribosomal protein S12</fullName>
    </alternativeName>
</protein>
<organism>
    <name type="scientific">Streptococcus equi subsp. equi (strain 4047)</name>
    <dbReference type="NCBI Taxonomy" id="553482"/>
    <lineage>
        <taxon>Bacteria</taxon>
        <taxon>Bacillati</taxon>
        <taxon>Bacillota</taxon>
        <taxon>Bacilli</taxon>
        <taxon>Lactobacillales</taxon>
        <taxon>Streptococcaceae</taxon>
        <taxon>Streptococcus</taxon>
    </lineage>
</organism>
<sequence>MPTINQLVRKPRKSKIEKSDSPALNIGYNSHKKVHTKLAAPQKRGVATRVGTMTPKKPNSALRKFARVRLSNLIEVTAYIPGIGHNLQEHSVVLIRGGRVKDLPGVRYHIVRGALDTAGVADRKQGRSKYGAKRPKG</sequence>
<evidence type="ECO:0000250" key="1"/>
<evidence type="ECO:0000255" key="2">
    <source>
        <dbReference type="HAMAP-Rule" id="MF_00403"/>
    </source>
</evidence>
<evidence type="ECO:0000256" key="3">
    <source>
        <dbReference type="SAM" id="MobiDB-lite"/>
    </source>
</evidence>
<evidence type="ECO:0000305" key="4"/>
<proteinExistence type="inferred from homology"/>
<dbReference type="EMBL" id="FM204883">
    <property type="protein sequence ID" value="CAW92456.1"/>
    <property type="molecule type" value="Genomic_DNA"/>
</dbReference>
<dbReference type="RefSeq" id="WP_012514925.1">
    <property type="nucleotide sequence ID" value="NC_012471.1"/>
</dbReference>
<dbReference type="SMR" id="C0M934"/>
<dbReference type="KEGG" id="seu:SEQ_0340"/>
<dbReference type="HOGENOM" id="CLU_104295_1_2_9"/>
<dbReference type="OrthoDB" id="9802366at2"/>
<dbReference type="Proteomes" id="UP000001365">
    <property type="component" value="Chromosome"/>
</dbReference>
<dbReference type="GO" id="GO:0015935">
    <property type="term" value="C:small ribosomal subunit"/>
    <property type="evidence" value="ECO:0007669"/>
    <property type="project" value="InterPro"/>
</dbReference>
<dbReference type="GO" id="GO:0019843">
    <property type="term" value="F:rRNA binding"/>
    <property type="evidence" value="ECO:0007669"/>
    <property type="project" value="UniProtKB-UniRule"/>
</dbReference>
<dbReference type="GO" id="GO:0003735">
    <property type="term" value="F:structural constituent of ribosome"/>
    <property type="evidence" value="ECO:0007669"/>
    <property type="project" value="InterPro"/>
</dbReference>
<dbReference type="GO" id="GO:0000049">
    <property type="term" value="F:tRNA binding"/>
    <property type="evidence" value="ECO:0007669"/>
    <property type="project" value="UniProtKB-UniRule"/>
</dbReference>
<dbReference type="GO" id="GO:0006412">
    <property type="term" value="P:translation"/>
    <property type="evidence" value="ECO:0007669"/>
    <property type="project" value="UniProtKB-UniRule"/>
</dbReference>
<dbReference type="CDD" id="cd03368">
    <property type="entry name" value="Ribosomal_S12"/>
    <property type="match status" value="1"/>
</dbReference>
<dbReference type="FunFam" id="2.40.50.140:FF:000001">
    <property type="entry name" value="30S ribosomal protein S12"/>
    <property type="match status" value="1"/>
</dbReference>
<dbReference type="Gene3D" id="2.40.50.140">
    <property type="entry name" value="Nucleic acid-binding proteins"/>
    <property type="match status" value="1"/>
</dbReference>
<dbReference type="HAMAP" id="MF_00403_B">
    <property type="entry name" value="Ribosomal_uS12_B"/>
    <property type="match status" value="1"/>
</dbReference>
<dbReference type="InterPro" id="IPR012340">
    <property type="entry name" value="NA-bd_OB-fold"/>
</dbReference>
<dbReference type="InterPro" id="IPR006032">
    <property type="entry name" value="Ribosomal_uS12"/>
</dbReference>
<dbReference type="InterPro" id="IPR005679">
    <property type="entry name" value="Ribosomal_uS12_bac"/>
</dbReference>
<dbReference type="NCBIfam" id="TIGR00981">
    <property type="entry name" value="rpsL_bact"/>
    <property type="match status" value="1"/>
</dbReference>
<dbReference type="PANTHER" id="PTHR11652">
    <property type="entry name" value="30S RIBOSOMAL PROTEIN S12 FAMILY MEMBER"/>
    <property type="match status" value="1"/>
</dbReference>
<dbReference type="Pfam" id="PF00164">
    <property type="entry name" value="Ribosom_S12_S23"/>
    <property type="match status" value="1"/>
</dbReference>
<dbReference type="PRINTS" id="PR01034">
    <property type="entry name" value="RIBOSOMALS12"/>
</dbReference>
<dbReference type="SUPFAM" id="SSF50249">
    <property type="entry name" value="Nucleic acid-binding proteins"/>
    <property type="match status" value="1"/>
</dbReference>
<dbReference type="PROSITE" id="PS00055">
    <property type="entry name" value="RIBOSOMAL_S12"/>
    <property type="match status" value="1"/>
</dbReference>
<gene>
    <name evidence="2" type="primary">rpsL</name>
    <name type="ordered locus">SEQ_0340</name>
</gene>
<comment type="function">
    <text evidence="2">With S4 and S5 plays an important role in translational accuracy.</text>
</comment>
<comment type="function">
    <text evidence="2">Interacts with and stabilizes bases of the 16S rRNA that are involved in tRNA selection in the A site and with the mRNA backbone. Located at the interface of the 30S and 50S subunits, it traverses the body of the 30S subunit contacting proteins on the other side and probably holding the rRNA structure together. The combined cluster of proteins S8, S12 and S17 appears to hold together the shoulder and platform of the 30S subunit.</text>
</comment>
<comment type="subunit">
    <text evidence="2">Part of the 30S ribosomal subunit. Contacts proteins S8 and S17. May interact with IF1 in the 30S initiation complex.</text>
</comment>
<comment type="similarity">
    <text evidence="2">Belongs to the universal ribosomal protein uS12 family.</text>
</comment>
<name>RS12_STRE4</name>
<keyword id="KW-0488">Methylation</keyword>
<keyword id="KW-0687">Ribonucleoprotein</keyword>
<keyword id="KW-0689">Ribosomal protein</keyword>
<keyword id="KW-0694">RNA-binding</keyword>
<keyword id="KW-0699">rRNA-binding</keyword>
<keyword id="KW-0820">tRNA-binding</keyword>
<feature type="chain" id="PRO_1000134655" description="Small ribosomal subunit protein uS12">
    <location>
        <begin position="1"/>
        <end position="137"/>
    </location>
</feature>
<feature type="region of interest" description="Disordered" evidence="3">
    <location>
        <begin position="1"/>
        <end position="21"/>
    </location>
</feature>
<feature type="region of interest" description="Disordered" evidence="3">
    <location>
        <begin position="34"/>
        <end position="57"/>
    </location>
</feature>
<feature type="modified residue" description="3-methylthioaspartic acid" evidence="1">
    <location>
        <position position="102"/>
    </location>
</feature>
<accession>C0M934</accession>